<gene>
    <name type="primary">ssb</name>
    <name type="ordered locus">SP_1540</name>
</gene>
<evidence type="ECO:0000255" key="1">
    <source>
        <dbReference type="HAMAP-Rule" id="MF_00984"/>
    </source>
</evidence>
<evidence type="ECO:0000256" key="2">
    <source>
        <dbReference type="SAM" id="MobiDB-lite"/>
    </source>
</evidence>
<comment type="function">
    <text evidence="1">Plays an important role in DNA replication, recombination and repair. Binds to ssDNA and to an array of partner proteins to recruit them to their sites of action during DNA metabolism.</text>
</comment>
<comment type="subunit">
    <text evidence="1">Homotetramer.</text>
</comment>
<comment type="interaction">
    <interactant intactId="EBI-11704480">
        <id>P66854</id>
    </interactant>
    <interactant intactId="EBI-11704462">
        <id>E7DN96</id>
    </interactant>
    <organismsDiffer>true</organismsDiffer>
    <experiments>2</experiments>
</comment>
<proteinExistence type="evidence at protein level"/>
<reference key="1">
    <citation type="journal article" date="2001" name="Science">
        <title>Complete genome sequence of a virulent isolate of Streptococcus pneumoniae.</title>
        <authorList>
            <person name="Tettelin H."/>
            <person name="Nelson K.E."/>
            <person name="Paulsen I.T."/>
            <person name="Eisen J.A."/>
            <person name="Read T.D."/>
            <person name="Peterson S.N."/>
            <person name="Heidelberg J.F."/>
            <person name="DeBoy R.T."/>
            <person name="Haft D.H."/>
            <person name="Dodson R.J."/>
            <person name="Durkin A.S."/>
            <person name="Gwinn M.L."/>
            <person name="Kolonay J.F."/>
            <person name="Nelson W.C."/>
            <person name="Peterson J.D."/>
            <person name="Umayam L.A."/>
            <person name="White O."/>
            <person name="Salzberg S.L."/>
            <person name="Lewis M.R."/>
            <person name="Radune D."/>
            <person name="Holtzapple E.K."/>
            <person name="Khouri H.M."/>
            <person name="Wolf A.M."/>
            <person name="Utterback T.R."/>
            <person name="Hansen C.L."/>
            <person name="McDonald L.A."/>
            <person name="Feldblyum T.V."/>
            <person name="Angiuoli S.V."/>
            <person name="Dickinson T."/>
            <person name="Hickey E.K."/>
            <person name="Holt I.E."/>
            <person name="Loftus B.J."/>
            <person name="Yang F."/>
            <person name="Smith H.O."/>
            <person name="Venter J.C."/>
            <person name="Dougherty B.A."/>
            <person name="Morrison D.A."/>
            <person name="Hollingshead S.K."/>
            <person name="Fraser C.M."/>
        </authorList>
    </citation>
    <scope>NUCLEOTIDE SEQUENCE [LARGE SCALE GENOMIC DNA]</scope>
    <source>
        <strain>ATCC BAA-334 / TIGR4</strain>
    </source>
</reference>
<protein>
    <recommendedName>
        <fullName evidence="1">Single-stranded DNA-binding protein</fullName>
        <shortName evidence="1">SSB</shortName>
    </recommendedName>
</protein>
<organism>
    <name type="scientific">Streptococcus pneumoniae serotype 4 (strain ATCC BAA-334 / TIGR4)</name>
    <dbReference type="NCBI Taxonomy" id="170187"/>
    <lineage>
        <taxon>Bacteria</taxon>
        <taxon>Bacillati</taxon>
        <taxon>Bacillota</taxon>
        <taxon>Bacilli</taxon>
        <taxon>Lactobacillales</taxon>
        <taxon>Streptococcaceae</taxon>
        <taxon>Streptococcus</taxon>
    </lineage>
</organism>
<feature type="chain" id="PRO_0000096124" description="Single-stranded DNA-binding protein">
    <location>
        <begin position="1"/>
        <end position="156"/>
    </location>
</feature>
<feature type="domain" description="SSB" evidence="1">
    <location>
        <begin position="1"/>
        <end position="104"/>
    </location>
</feature>
<feature type="region of interest" description="Disordered" evidence="2">
    <location>
        <begin position="111"/>
        <end position="156"/>
    </location>
</feature>
<feature type="short sequence motif" description="Important for interaction with partner proteins" evidence="1">
    <location>
        <begin position="151"/>
        <end position="156"/>
    </location>
</feature>
<feature type="compositionally biased region" description="Polar residues" evidence="2">
    <location>
        <begin position="120"/>
        <end position="132"/>
    </location>
</feature>
<name>SSB_STRPN</name>
<accession>P66854</accession>
<accession>Q8DP28</accession>
<accession>Q97PR2</accession>
<keyword id="KW-0227">DNA damage</keyword>
<keyword id="KW-0233">DNA recombination</keyword>
<keyword id="KW-0234">DNA repair</keyword>
<keyword id="KW-0235">DNA replication</keyword>
<keyword id="KW-0238">DNA-binding</keyword>
<keyword id="KW-1185">Reference proteome</keyword>
<sequence length="156" mass="17351">MINNVVLVGRMTRDAELRYTPSNVAVATFTLAVNRTFKSQNGEREADFINVVMWRQQAENLANWAKKGSLIGVTGRIQTRSYDNQQGQRVYVTEVVAENFQMLESRSVREGHTGGAYSAPTANYSAPTNSVPDFSRNENPFGATNPLDISDDDLPF</sequence>
<dbReference type="EMBL" id="AE005672">
    <property type="protein sequence ID" value="AAK75628.1"/>
    <property type="molecule type" value="Genomic_DNA"/>
</dbReference>
<dbReference type="PIR" id="C95179">
    <property type="entry name" value="C95179"/>
</dbReference>
<dbReference type="SMR" id="P66854"/>
<dbReference type="IntAct" id="P66854">
    <property type="interactions" value="1"/>
</dbReference>
<dbReference type="PaxDb" id="170187-SP_1540"/>
<dbReference type="EnsemblBacteria" id="AAK75628">
    <property type="protein sequence ID" value="AAK75628"/>
    <property type="gene ID" value="SP_1540"/>
</dbReference>
<dbReference type="KEGG" id="spn:SP_1540"/>
<dbReference type="eggNOG" id="COG0629">
    <property type="taxonomic scope" value="Bacteria"/>
</dbReference>
<dbReference type="PhylomeDB" id="P66854"/>
<dbReference type="BioCyc" id="SPNE170187:G1FZB-1558-MONOMER"/>
<dbReference type="Proteomes" id="UP000000585">
    <property type="component" value="Chromosome"/>
</dbReference>
<dbReference type="GO" id="GO:0009295">
    <property type="term" value="C:nucleoid"/>
    <property type="evidence" value="ECO:0007669"/>
    <property type="project" value="TreeGrafter"/>
</dbReference>
<dbReference type="GO" id="GO:0003697">
    <property type="term" value="F:single-stranded DNA binding"/>
    <property type="evidence" value="ECO:0007669"/>
    <property type="project" value="UniProtKB-UniRule"/>
</dbReference>
<dbReference type="GO" id="GO:0006310">
    <property type="term" value="P:DNA recombination"/>
    <property type="evidence" value="ECO:0007669"/>
    <property type="project" value="UniProtKB-UniRule"/>
</dbReference>
<dbReference type="GO" id="GO:0006281">
    <property type="term" value="P:DNA repair"/>
    <property type="evidence" value="ECO:0007669"/>
    <property type="project" value="UniProtKB-UniRule"/>
</dbReference>
<dbReference type="GO" id="GO:0006260">
    <property type="term" value="P:DNA replication"/>
    <property type="evidence" value="ECO:0007669"/>
    <property type="project" value="UniProtKB-UniRule"/>
</dbReference>
<dbReference type="CDD" id="cd04496">
    <property type="entry name" value="SSB_OBF"/>
    <property type="match status" value="1"/>
</dbReference>
<dbReference type="FunFam" id="2.40.50.140:FF:000084">
    <property type="entry name" value="Single-stranded DNA-binding protein"/>
    <property type="match status" value="1"/>
</dbReference>
<dbReference type="Gene3D" id="2.40.50.140">
    <property type="entry name" value="Nucleic acid-binding proteins"/>
    <property type="match status" value="1"/>
</dbReference>
<dbReference type="HAMAP" id="MF_00984">
    <property type="entry name" value="SSB"/>
    <property type="match status" value="1"/>
</dbReference>
<dbReference type="InterPro" id="IPR012340">
    <property type="entry name" value="NA-bd_OB-fold"/>
</dbReference>
<dbReference type="InterPro" id="IPR000424">
    <property type="entry name" value="Primosome_PriB/ssb"/>
</dbReference>
<dbReference type="InterPro" id="IPR011344">
    <property type="entry name" value="ssDNA-bd"/>
</dbReference>
<dbReference type="NCBIfam" id="NF005580">
    <property type="entry name" value="PRK07275.1"/>
    <property type="match status" value="1"/>
</dbReference>
<dbReference type="NCBIfam" id="TIGR00621">
    <property type="entry name" value="ssb"/>
    <property type="match status" value="1"/>
</dbReference>
<dbReference type="PANTHER" id="PTHR10302">
    <property type="entry name" value="SINGLE-STRANDED DNA-BINDING PROTEIN"/>
    <property type="match status" value="1"/>
</dbReference>
<dbReference type="PANTHER" id="PTHR10302:SF27">
    <property type="entry name" value="SINGLE-STRANDED DNA-BINDING PROTEIN"/>
    <property type="match status" value="1"/>
</dbReference>
<dbReference type="Pfam" id="PF00436">
    <property type="entry name" value="SSB"/>
    <property type="match status" value="1"/>
</dbReference>
<dbReference type="PIRSF" id="PIRSF002070">
    <property type="entry name" value="SSB"/>
    <property type="match status" value="1"/>
</dbReference>
<dbReference type="SUPFAM" id="SSF50249">
    <property type="entry name" value="Nucleic acid-binding proteins"/>
    <property type="match status" value="1"/>
</dbReference>
<dbReference type="PROSITE" id="PS50935">
    <property type="entry name" value="SSB"/>
    <property type="match status" value="1"/>
</dbReference>